<comment type="function">
    <text evidence="5 6">Calcium-permeable, non-selective cation channel with an outward rectification. Seems to be regulated, at least in part, by IGF1, PDGF and neuropeptide head activator. May transduce physical stimuli in mast cells. Activated by temperatures higher than 52 degrees Celsius; is not activated by vanilloids and acidic pH.</text>
</comment>
<comment type="catalytic activity">
    <reaction evidence="5 6">
        <text>Ca(2+)(in) = Ca(2+)(out)</text>
        <dbReference type="Rhea" id="RHEA:29671"/>
        <dbReference type="ChEBI" id="CHEBI:29108"/>
    </reaction>
</comment>
<comment type="catalytic activity">
    <reaction evidence="2">
        <text>Mg(2+)(in) = Mg(2+)(out)</text>
        <dbReference type="Rhea" id="RHEA:29827"/>
        <dbReference type="ChEBI" id="CHEBI:18420"/>
    </reaction>
</comment>
<comment type="catalytic activity">
    <reaction evidence="2">
        <text>Na(+)(in) = Na(+)(out)</text>
        <dbReference type="Rhea" id="RHEA:34963"/>
        <dbReference type="ChEBI" id="CHEBI:29101"/>
    </reaction>
</comment>
<comment type="catalytic activity">
    <reaction evidence="2">
        <text>K(+)(in) = K(+)(out)</text>
        <dbReference type="Rhea" id="RHEA:29463"/>
        <dbReference type="ChEBI" id="CHEBI:29103"/>
    </reaction>
</comment>
<comment type="subunit">
    <text evidence="1 7">Homotetramer (Probable). Interacts with a cAMP-dependent protein kinase type II regulatory subunit (PRKAR2A or PRKAR2B) and ACBD3. Interacts with SLC50A1; the interaction probably occurs intracellularly and depends on TRPV2 N-glycosylation (By similarity).</text>
</comment>
<comment type="subcellular location">
    <subcellularLocation>
        <location evidence="5">Cell membrane</location>
        <topology evidence="3">Multi-pass membrane protein</topology>
    </subcellularLocation>
    <subcellularLocation>
        <location evidence="5">Cytoplasm</location>
    </subcellularLocation>
    <subcellularLocation>
        <location evidence="2">Melanosome</location>
    </subcellularLocation>
    <text evidence="5">Translocates from the cytoplasm to the plasma membrane upon ligand stimulation.</text>
</comment>
<comment type="tissue specificity">
    <text evidence="5">Abundantly expressed in spleen, placenta, skeleton muscle, lung and brain.</text>
</comment>
<comment type="PTM">
    <text evidence="5">N-glycosylated.</text>
</comment>
<comment type="PTM">
    <text evidence="1">Phosphorylated by PKA.</text>
</comment>
<comment type="similarity">
    <text evidence="7">Belongs to the transient receptor (TC 1.A.4) family. TrpV subfamily. TRPV2 sub-subfamily.</text>
</comment>
<gene>
    <name type="primary">Trpv2</name>
    <name type="synonym">Grc</name>
</gene>
<evidence type="ECO:0000250" key="1">
    <source>
        <dbReference type="UniProtKB" id="Q9WUD2"/>
    </source>
</evidence>
<evidence type="ECO:0000250" key="2">
    <source>
        <dbReference type="UniProtKB" id="Q9Y5S1"/>
    </source>
</evidence>
<evidence type="ECO:0000255" key="3"/>
<evidence type="ECO:0000256" key="4">
    <source>
        <dbReference type="SAM" id="MobiDB-lite"/>
    </source>
</evidence>
<evidence type="ECO:0000269" key="5">
    <source>
    </source>
</evidence>
<evidence type="ECO:0000269" key="6">
    <source>
    </source>
</evidence>
<evidence type="ECO:0000305" key="7"/>
<evidence type="ECO:0007744" key="8">
    <source>
    </source>
</evidence>
<evidence type="ECO:0007744" key="9">
    <source>
    </source>
</evidence>
<evidence type="ECO:0007829" key="10">
    <source>
        <dbReference type="PDB" id="7XEM"/>
    </source>
</evidence>
<evidence type="ECO:0007829" key="11">
    <source>
        <dbReference type="PDB" id="7XER"/>
    </source>
</evidence>
<evidence type="ECO:0007829" key="12">
    <source>
        <dbReference type="PDB" id="7XEU"/>
    </source>
</evidence>
<evidence type="ECO:0007829" key="13">
    <source>
        <dbReference type="PDB" id="7XEV"/>
    </source>
</evidence>
<evidence type="ECO:0007829" key="14">
    <source>
        <dbReference type="PDB" id="7XEW"/>
    </source>
</evidence>
<evidence type="ECO:0007829" key="15">
    <source>
        <dbReference type="PDB" id="7YEP"/>
    </source>
</evidence>
<sequence>MTSASNPPAFRLETSDGDEEGSAEVNKGKNEPPPMESPFQGEDRNFSPQIKVNLNYRKGLGPSQQDPNRFDRDRLFSVVSRGVPEELTGLLEYLRRTSKYLTDSAYTEGSTGKTCLMKAVLNLQDGVNACILPLLQIDRDSGNPQPLVNAQCTDEFYRGHSALHIAIEKRSLWCVKLLVENGANVHIRACGRFFQKHQGTCFYFGELPLSLAACTKQWDVVTYLLENPHQPASLEATDSLGNTVLHALVMIADNSPENSALVIHMYDSLLQMGARLCPTVQLEDICNHQGLTPLKLAAKEGKIEIFRHILQREFSGLYQPLSRKFTEWCYGPVRVSLYDLSSVDSWEKNSVLEIIAFHCKSPHRHRMVVLEPLNKLLQEKWDRLIPRFFFNFACYLVYMIIFTIVAYHQPSLEQPAIPSSKATFGDSMLLLGHILILLGGIYLLLGQLWYFWRRRLFIWISFMDSYFEILFLVQALLTVLSQVLRFVETEWYLPLLVSSLVLGWLNLLYYTRGFQHTGIYSVMIQKVILRDLLRFLLVYLVFLFGFAVALVSLSREARSPKAPEDSNTTVTEKPTLGQEEEPVPYGGILDASLELFKFTIGMGELAFQEQLRFRGVVLLLLLAYVLLTYVLLLNMLIALMSETVNSVATDSWSIWKLQKAISVLEMENGYWWCRRKRHRAGRLLKVGTKGDGIPDERWCFRVEEVNWAAWEKTLPTLSEDPSGAGITGYKKNPTSKPGKNSASEEDHLPLQVLQSH</sequence>
<name>TRPV2_MOUSE</name>
<reference key="1">
    <citation type="journal article" date="1999" name="Nat. Cell Biol.">
        <title>Translocation of a calcium-permeable cation channel induced by insulin-like growth factor-I.</title>
        <authorList>
            <person name="Kanzaki M."/>
            <person name="Zhang Y.-Q."/>
            <person name="Mashima H."/>
            <person name="Li L."/>
            <person name="Shibata H."/>
            <person name="Kojima I."/>
        </authorList>
    </citation>
    <scope>NUCLEOTIDE SEQUENCE [MRNA]</scope>
    <scope>FUNCTION</scope>
    <scope>SUBCELLULAR LOCATION</scope>
    <scope>TISSUE SPECIFICITY</scope>
    <scope>GLYCOSYLATION</scope>
    <scope>TRANSPORTER ACTIVITY</scope>
    <source>
        <strain>C57BL/6J</strain>
        <tissue>Spleen</tissue>
    </source>
</reference>
<reference key="2">
    <citation type="journal article" date="2005" name="Science">
        <title>The transcriptional landscape of the mammalian genome.</title>
        <authorList>
            <person name="Carninci P."/>
            <person name="Kasukawa T."/>
            <person name="Katayama S."/>
            <person name="Gough J."/>
            <person name="Frith M.C."/>
            <person name="Maeda N."/>
            <person name="Oyama R."/>
            <person name="Ravasi T."/>
            <person name="Lenhard B."/>
            <person name="Wells C."/>
            <person name="Kodzius R."/>
            <person name="Shimokawa K."/>
            <person name="Bajic V.B."/>
            <person name="Brenner S.E."/>
            <person name="Batalov S."/>
            <person name="Forrest A.R."/>
            <person name="Zavolan M."/>
            <person name="Davis M.J."/>
            <person name="Wilming L.G."/>
            <person name="Aidinis V."/>
            <person name="Allen J.E."/>
            <person name="Ambesi-Impiombato A."/>
            <person name="Apweiler R."/>
            <person name="Aturaliya R.N."/>
            <person name="Bailey T.L."/>
            <person name="Bansal M."/>
            <person name="Baxter L."/>
            <person name="Beisel K.W."/>
            <person name="Bersano T."/>
            <person name="Bono H."/>
            <person name="Chalk A.M."/>
            <person name="Chiu K.P."/>
            <person name="Choudhary V."/>
            <person name="Christoffels A."/>
            <person name="Clutterbuck D.R."/>
            <person name="Crowe M.L."/>
            <person name="Dalla E."/>
            <person name="Dalrymple B.P."/>
            <person name="de Bono B."/>
            <person name="Della Gatta G."/>
            <person name="di Bernardo D."/>
            <person name="Down T."/>
            <person name="Engstrom P."/>
            <person name="Fagiolini M."/>
            <person name="Faulkner G."/>
            <person name="Fletcher C.F."/>
            <person name="Fukushima T."/>
            <person name="Furuno M."/>
            <person name="Futaki S."/>
            <person name="Gariboldi M."/>
            <person name="Georgii-Hemming P."/>
            <person name="Gingeras T.R."/>
            <person name="Gojobori T."/>
            <person name="Green R.E."/>
            <person name="Gustincich S."/>
            <person name="Harbers M."/>
            <person name="Hayashi Y."/>
            <person name="Hensch T.K."/>
            <person name="Hirokawa N."/>
            <person name="Hill D."/>
            <person name="Huminiecki L."/>
            <person name="Iacono M."/>
            <person name="Ikeo K."/>
            <person name="Iwama A."/>
            <person name="Ishikawa T."/>
            <person name="Jakt M."/>
            <person name="Kanapin A."/>
            <person name="Katoh M."/>
            <person name="Kawasawa Y."/>
            <person name="Kelso J."/>
            <person name="Kitamura H."/>
            <person name="Kitano H."/>
            <person name="Kollias G."/>
            <person name="Krishnan S.P."/>
            <person name="Kruger A."/>
            <person name="Kummerfeld S.K."/>
            <person name="Kurochkin I.V."/>
            <person name="Lareau L.F."/>
            <person name="Lazarevic D."/>
            <person name="Lipovich L."/>
            <person name="Liu J."/>
            <person name="Liuni S."/>
            <person name="McWilliam S."/>
            <person name="Madan Babu M."/>
            <person name="Madera M."/>
            <person name="Marchionni L."/>
            <person name="Matsuda H."/>
            <person name="Matsuzawa S."/>
            <person name="Miki H."/>
            <person name="Mignone F."/>
            <person name="Miyake S."/>
            <person name="Morris K."/>
            <person name="Mottagui-Tabar S."/>
            <person name="Mulder N."/>
            <person name="Nakano N."/>
            <person name="Nakauchi H."/>
            <person name="Ng P."/>
            <person name="Nilsson R."/>
            <person name="Nishiguchi S."/>
            <person name="Nishikawa S."/>
            <person name="Nori F."/>
            <person name="Ohara O."/>
            <person name="Okazaki Y."/>
            <person name="Orlando V."/>
            <person name="Pang K.C."/>
            <person name="Pavan W.J."/>
            <person name="Pavesi G."/>
            <person name="Pesole G."/>
            <person name="Petrovsky N."/>
            <person name="Piazza S."/>
            <person name="Reed J."/>
            <person name="Reid J.F."/>
            <person name="Ring B.Z."/>
            <person name="Ringwald M."/>
            <person name="Rost B."/>
            <person name="Ruan Y."/>
            <person name="Salzberg S.L."/>
            <person name="Sandelin A."/>
            <person name="Schneider C."/>
            <person name="Schoenbach C."/>
            <person name="Sekiguchi K."/>
            <person name="Semple C.A."/>
            <person name="Seno S."/>
            <person name="Sessa L."/>
            <person name="Sheng Y."/>
            <person name="Shibata Y."/>
            <person name="Shimada H."/>
            <person name="Shimada K."/>
            <person name="Silva D."/>
            <person name="Sinclair B."/>
            <person name="Sperling S."/>
            <person name="Stupka E."/>
            <person name="Sugiura K."/>
            <person name="Sultana R."/>
            <person name="Takenaka Y."/>
            <person name="Taki K."/>
            <person name="Tammoja K."/>
            <person name="Tan S.L."/>
            <person name="Tang S."/>
            <person name="Taylor M.S."/>
            <person name="Tegner J."/>
            <person name="Teichmann S.A."/>
            <person name="Ueda H.R."/>
            <person name="van Nimwegen E."/>
            <person name="Verardo R."/>
            <person name="Wei C.L."/>
            <person name="Yagi K."/>
            <person name="Yamanishi H."/>
            <person name="Zabarovsky E."/>
            <person name="Zhu S."/>
            <person name="Zimmer A."/>
            <person name="Hide W."/>
            <person name="Bult C."/>
            <person name="Grimmond S.M."/>
            <person name="Teasdale R.D."/>
            <person name="Liu E.T."/>
            <person name="Brusic V."/>
            <person name="Quackenbush J."/>
            <person name="Wahlestedt C."/>
            <person name="Mattick J.S."/>
            <person name="Hume D.A."/>
            <person name="Kai C."/>
            <person name="Sasaki D."/>
            <person name="Tomaru Y."/>
            <person name="Fukuda S."/>
            <person name="Kanamori-Katayama M."/>
            <person name="Suzuki M."/>
            <person name="Aoki J."/>
            <person name="Arakawa T."/>
            <person name="Iida J."/>
            <person name="Imamura K."/>
            <person name="Itoh M."/>
            <person name="Kato T."/>
            <person name="Kawaji H."/>
            <person name="Kawagashira N."/>
            <person name="Kawashima T."/>
            <person name="Kojima M."/>
            <person name="Kondo S."/>
            <person name="Konno H."/>
            <person name="Nakano K."/>
            <person name="Ninomiya N."/>
            <person name="Nishio T."/>
            <person name="Okada M."/>
            <person name="Plessy C."/>
            <person name="Shibata K."/>
            <person name="Shiraki T."/>
            <person name="Suzuki S."/>
            <person name="Tagami M."/>
            <person name="Waki K."/>
            <person name="Watahiki A."/>
            <person name="Okamura-Oho Y."/>
            <person name="Suzuki H."/>
            <person name="Kawai J."/>
            <person name="Hayashizaki Y."/>
        </authorList>
    </citation>
    <scope>NUCLEOTIDE SEQUENCE [LARGE SCALE MRNA]</scope>
</reference>
<reference key="3">
    <citation type="journal article" date="2009" name="PLoS Biol.">
        <title>Lineage-specific biology revealed by a finished genome assembly of the mouse.</title>
        <authorList>
            <person name="Church D.M."/>
            <person name="Goodstadt L."/>
            <person name="Hillier L.W."/>
            <person name="Zody M.C."/>
            <person name="Goldstein S."/>
            <person name="She X."/>
            <person name="Bult C.J."/>
            <person name="Agarwala R."/>
            <person name="Cherry J.L."/>
            <person name="DiCuccio M."/>
            <person name="Hlavina W."/>
            <person name="Kapustin Y."/>
            <person name="Meric P."/>
            <person name="Maglott D."/>
            <person name="Birtle Z."/>
            <person name="Marques A.C."/>
            <person name="Graves T."/>
            <person name="Zhou S."/>
            <person name="Teague B."/>
            <person name="Potamousis K."/>
            <person name="Churas C."/>
            <person name="Place M."/>
            <person name="Herschleb J."/>
            <person name="Runnheim R."/>
            <person name="Forrest D."/>
            <person name="Amos-Landgraf J."/>
            <person name="Schwartz D.C."/>
            <person name="Cheng Z."/>
            <person name="Lindblad-Toh K."/>
            <person name="Eichler E.E."/>
            <person name="Ponting C.P."/>
        </authorList>
    </citation>
    <scope>NUCLEOTIDE SEQUENCE [LARGE SCALE GENOMIC DNA]</scope>
    <source>
        <strain>C57BL/6J</strain>
    </source>
</reference>
<reference key="4">
    <citation type="journal article" date="2004" name="Genome Res.">
        <title>The status, quality, and expansion of the NIH full-length cDNA project: the Mammalian Gene Collection (MGC).</title>
        <authorList>
            <consortium name="The MGC Project Team"/>
        </authorList>
    </citation>
    <scope>NUCLEOTIDE SEQUENCE [LARGE SCALE MRNA]</scope>
    <source>
        <strain>FVB/N</strain>
        <tissue>Mammary gland</tissue>
    </source>
</reference>
<reference key="5">
    <citation type="journal article" date="2001" name="J. Cell Sci.">
        <title>The neuropeptide head activator induces activation and translocation of the growth-factor-regulated Ca(2+)-permeable channel GRC.</title>
        <authorList>
            <person name="Boels K."/>
            <person name="Glassmeier G."/>
            <person name="Herrmann D."/>
            <person name="Riedel I.B."/>
            <person name="Hampe W."/>
            <person name="Kojima I."/>
            <person name="Schwarz J.R."/>
            <person name="Schaller H.C."/>
        </authorList>
    </citation>
    <scope>FUNCTION</scope>
    <scope>SUBCELLULAR LOCATION</scope>
    <scope>TRANSPORTER ACTIVITY</scope>
</reference>
<reference key="6">
    <citation type="journal article" date="2009" name="Immunity">
        <title>The phagosomal proteome in interferon-gamma-activated macrophages.</title>
        <authorList>
            <person name="Trost M."/>
            <person name="English L."/>
            <person name="Lemieux S."/>
            <person name="Courcelles M."/>
            <person name="Desjardins M."/>
            <person name="Thibault P."/>
        </authorList>
    </citation>
    <scope>PHOSPHORYLATION [LARGE SCALE ANALYSIS] AT SER-15 AND SER-755</scope>
    <scope>IDENTIFICATION BY MASS SPECTROMETRY [LARGE SCALE ANALYSIS]</scope>
</reference>
<reference key="7">
    <citation type="journal article" date="2010" name="Cell">
        <title>A tissue-specific atlas of mouse protein phosphorylation and expression.</title>
        <authorList>
            <person name="Huttlin E.L."/>
            <person name="Jedrychowski M.P."/>
            <person name="Elias J.E."/>
            <person name="Goswami T."/>
            <person name="Rad R."/>
            <person name="Beausoleil S.A."/>
            <person name="Villen J."/>
            <person name="Haas W."/>
            <person name="Sowa M.E."/>
            <person name="Gygi S.P."/>
        </authorList>
    </citation>
    <scope>PHOSPHORYLATION [LARGE SCALE ANALYSIS] AT SER-15 AND SER-743</scope>
    <scope>IDENTIFICATION BY MASS SPECTROMETRY [LARGE SCALE ANALYSIS]</scope>
    <source>
        <tissue>Brain</tissue>
        <tissue>Lung</tissue>
        <tissue>Spleen</tissue>
    </source>
</reference>
<protein>
    <recommendedName>
        <fullName>Transient receptor potential cation channel subfamily V member 2</fullName>
        <shortName>TrpV2</shortName>
    </recommendedName>
    <alternativeName>
        <fullName>Growth factor-regulated calcium channel</fullName>
        <shortName>GRC</shortName>
    </alternativeName>
    <alternativeName>
        <fullName>Osm-9-like TRP channel 2</fullName>
        <shortName>OTRPC2</shortName>
    </alternativeName>
</protein>
<dbReference type="EMBL" id="AB021665">
    <property type="protein sequence ID" value="BAA78478.1"/>
    <property type="molecule type" value="mRNA"/>
</dbReference>
<dbReference type="EMBL" id="AK089004">
    <property type="protein sequence ID" value="BAC40695.1"/>
    <property type="molecule type" value="mRNA"/>
</dbReference>
<dbReference type="EMBL" id="AL596181">
    <property type="status" value="NOT_ANNOTATED_CDS"/>
    <property type="molecule type" value="Genomic_DNA"/>
</dbReference>
<dbReference type="EMBL" id="BC005415">
    <property type="protein sequence ID" value="AAH05415.1"/>
    <property type="molecule type" value="mRNA"/>
</dbReference>
<dbReference type="CCDS" id="CCDS24827.1"/>
<dbReference type="RefSeq" id="NP_001369418.1">
    <property type="nucleotide sequence ID" value="NM_001382489.1"/>
</dbReference>
<dbReference type="RefSeq" id="NP_001369419.1">
    <property type="nucleotide sequence ID" value="NM_001382490.1"/>
</dbReference>
<dbReference type="RefSeq" id="NP_035836.2">
    <property type="nucleotide sequence ID" value="NM_011706.2"/>
</dbReference>
<dbReference type="RefSeq" id="XP_006533228.1">
    <property type="nucleotide sequence ID" value="XM_006533165.2"/>
</dbReference>
<dbReference type="RefSeq" id="XP_011247273.1">
    <property type="nucleotide sequence ID" value="XM_011248971.1"/>
</dbReference>
<dbReference type="RefSeq" id="XP_036012523.1">
    <property type="nucleotide sequence ID" value="XM_036156630.1"/>
</dbReference>
<dbReference type="PDB" id="7XEM">
    <property type="method" value="EM"/>
    <property type="resolution" value="3.17 A"/>
    <property type="chains" value="A/B/C/D=1-756"/>
</dbReference>
<dbReference type="PDB" id="7XEO">
    <property type="method" value="EM"/>
    <property type="resolution" value="2.89 A"/>
    <property type="chains" value="A/B/C/D=1-756"/>
</dbReference>
<dbReference type="PDB" id="7XER">
    <property type="method" value="EM"/>
    <property type="resolution" value="2.47 A"/>
    <property type="chains" value="A/B/C/D=1-756"/>
</dbReference>
<dbReference type="PDB" id="7XEU">
    <property type="method" value="EM"/>
    <property type="resolution" value="2.77 A"/>
    <property type="chains" value="A/B/C/D=1-756"/>
</dbReference>
<dbReference type="PDB" id="7XEV">
    <property type="method" value="EM"/>
    <property type="resolution" value="3.27 A"/>
    <property type="chains" value="A/B/C/D=1-756"/>
</dbReference>
<dbReference type="PDB" id="7XEW">
    <property type="method" value="EM"/>
    <property type="resolution" value="2.59 A"/>
    <property type="chains" value="A/B/C/D=1-756"/>
</dbReference>
<dbReference type="PDB" id="7YEP">
    <property type="method" value="EM"/>
    <property type="resolution" value="2.83 A"/>
    <property type="chains" value="A/B/C/D=1-756"/>
</dbReference>
<dbReference type="PDBsum" id="7XEM"/>
<dbReference type="PDBsum" id="7XEO"/>
<dbReference type="PDBsum" id="7XER"/>
<dbReference type="PDBsum" id="7XEU"/>
<dbReference type="PDBsum" id="7XEV"/>
<dbReference type="PDBsum" id="7XEW"/>
<dbReference type="PDBsum" id="7YEP"/>
<dbReference type="EMDB" id="EMD-33156"/>
<dbReference type="EMDB" id="EMD-33157"/>
<dbReference type="EMDB" id="EMD-33158"/>
<dbReference type="EMDB" id="EMD-33159"/>
<dbReference type="EMDB" id="EMD-33160"/>
<dbReference type="EMDB" id="EMD-33161"/>
<dbReference type="EMDB" id="EMD-33774"/>
<dbReference type="SMR" id="Q9WTR1"/>
<dbReference type="BioGRID" id="204537">
    <property type="interactions" value="2"/>
</dbReference>
<dbReference type="FunCoup" id="Q9WTR1">
    <property type="interactions" value="308"/>
</dbReference>
<dbReference type="IntAct" id="Q9WTR1">
    <property type="interactions" value="2"/>
</dbReference>
<dbReference type="MINT" id="Q9WTR1"/>
<dbReference type="STRING" id="10090.ENSMUSP00000018651"/>
<dbReference type="BindingDB" id="Q9WTR1"/>
<dbReference type="ChEMBL" id="CHEMBL4523498"/>
<dbReference type="GuidetoPHARMACOLOGY" id="508"/>
<dbReference type="TCDB" id="1.A.4.2.4">
    <property type="family name" value="the transient receptor potential ca2+/cation channel (trp-cc) family"/>
</dbReference>
<dbReference type="GlyCosmos" id="Q9WTR1">
    <property type="glycosylation" value="1 site, No reported glycans"/>
</dbReference>
<dbReference type="GlyGen" id="Q9WTR1">
    <property type="glycosylation" value="2 sites, 1 N-linked glycan (1 site), 1 O-linked glycan (1 site)"/>
</dbReference>
<dbReference type="iPTMnet" id="Q9WTR1"/>
<dbReference type="MetOSite" id="Q9WTR1"/>
<dbReference type="PhosphoSitePlus" id="Q9WTR1"/>
<dbReference type="SwissPalm" id="Q9WTR1"/>
<dbReference type="jPOST" id="Q9WTR1"/>
<dbReference type="PaxDb" id="10090-ENSMUSP00000018651"/>
<dbReference type="PeptideAtlas" id="Q9WTR1"/>
<dbReference type="ProteomicsDB" id="258986"/>
<dbReference type="Antibodypedia" id="13247">
    <property type="antibodies" value="295 antibodies from 34 providers"/>
</dbReference>
<dbReference type="DNASU" id="22368"/>
<dbReference type="Ensembl" id="ENSMUST00000018651.14">
    <property type="protein sequence ID" value="ENSMUSP00000018651.8"/>
    <property type="gene ID" value="ENSMUSG00000018507.17"/>
</dbReference>
<dbReference type="Ensembl" id="ENSMUST00000102643.2">
    <property type="protein sequence ID" value="ENSMUSP00000099703.2"/>
    <property type="gene ID" value="ENSMUSG00000018507.17"/>
</dbReference>
<dbReference type="GeneID" id="22368"/>
<dbReference type="KEGG" id="mmu:22368"/>
<dbReference type="UCSC" id="uc007jjh.1">
    <property type="organism name" value="mouse"/>
</dbReference>
<dbReference type="AGR" id="MGI:1341836"/>
<dbReference type="CTD" id="51393"/>
<dbReference type="MGI" id="MGI:1341836">
    <property type="gene designation" value="Trpv2"/>
</dbReference>
<dbReference type="VEuPathDB" id="HostDB:ENSMUSG00000018507"/>
<dbReference type="eggNOG" id="KOG3676">
    <property type="taxonomic scope" value="Eukaryota"/>
</dbReference>
<dbReference type="GeneTree" id="ENSGT00940000158512"/>
<dbReference type="HOGENOM" id="CLU_012795_1_1_1"/>
<dbReference type="InParanoid" id="Q9WTR1"/>
<dbReference type="OMA" id="WRRHVFI"/>
<dbReference type="OrthoDB" id="533508at2759"/>
<dbReference type="PhylomeDB" id="Q9WTR1"/>
<dbReference type="TreeFam" id="TF314711"/>
<dbReference type="Reactome" id="R-MMU-3295583">
    <property type="pathway name" value="TRP channels"/>
</dbReference>
<dbReference type="BioGRID-ORCS" id="22368">
    <property type="hits" value="4 hits in 77 CRISPR screens"/>
</dbReference>
<dbReference type="CD-CODE" id="CE726F99">
    <property type="entry name" value="Postsynaptic density"/>
</dbReference>
<dbReference type="PRO" id="PR:Q9WTR1"/>
<dbReference type="Proteomes" id="UP000000589">
    <property type="component" value="Chromosome 11"/>
</dbReference>
<dbReference type="RNAct" id="Q9WTR1">
    <property type="molecule type" value="protein"/>
</dbReference>
<dbReference type="Bgee" id="ENSMUSG00000018507">
    <property type="expression patterns" value="Expressed in placenta labyrinth and 151 other cell types or tissues"/>
</dbReference>
<dbReference type="GO" id="GO:0030424">
    <property type="term" value="C:axon"/>
    <property type="evidence" value="ECO:0000314"/>
    <property type="project" value="DFLAT"/>
</dbReference>
<dbReference type="GO" id="GO:0044295">
    <property type="term" value="C:axonal growth cone"/>
    <property type="evidence" value="ECO:0000314"/>
    <property type="project" value="DFLAT"/>
</dbReference>
<dbReference type="GO" id="GO:0044297">
    <property type="term" value="C:cell body"/>
    <property type="evidence" value="ECO:0000314"/>
    <property type="project" value="DFLAT"/>
</dbReference>
<dbReference type="GO" id="GO:0009986">
    <property type="term" value="C:cell surface"/>
    <property type="evidence" value="ECO:0000314"/>
    <property type="project" value="DFLAT"/>
</dbReference>
<dbReference type="GO" id="GO:0032584">
    <property type="term" value="C:growth cone membrane"/>
    <property type="evidence" value="ECO:0000314"/>
    <property type="project" value="DFLAT"/>
</dbReference>
<dbReference type="GO" id="GO:0042470">
    <property type="term" value="C:melanosome"/>
    <property type="evidence" value="ECO:0007669"/>
    <property type="project" value="UniProtKB-SubCell"/>
</dbReference>
<dbReference type="GO" id="GO:0005886">
    <property type="term" value="C:plasma membrane"/>
    <property type="evidence" value="ECO:0000314"/>
    <property type="project" value="MGI"/>
</dbReference>
<dbReference type="GO" id="GO:0005262">
    <property type="term" value="F:calcium channel activity"/>
    <property type="evidence" value="ECO:0000314"/>
    <property type="project" value="UniProtKB"/>
</dbReference>
<dbReference type="GO" id="GO:0005261">
    <property type="term" value="F:monoatomic cation channel activity"/>
    <property type="evidence" value="ECO:0000314"/>
    <property type="project" value="MGI"/>
</dbReference>
<dbReference type="GO" id="GO:0045773">
    <property type="term" value="P:positive regulation of axon extension"/>
    <property type="evidence" value="ECO:0000315"/>
    <property type="project" value="DFLAT"/>
</dbReference>
<dbReference type="GO" id="GO:0090280">
    <property type="term" value="P:positive regulation of calcium ion import"/>
    <property type="evidence" value="ECO:0000315"/>
    <property type="project" value="DFLAT"/>
</dbReference>
<dbReference type="GO" id="GO:0120162">
    <property type="term" value="P:positive regulation of cold-induced thermogenesis"/>
    <property type="evidence" value="ECO:0000315"/>
    <property type="project" value="YuBioLab"/>
</dbReference>
<dbReference type="GO" id="GO:0009266">
    <property type="term" value="P:response to temperature stimulus"/>
    <property type="evidence" value="ECO:0000266"/>
    <property type="project" value="MGI"/>
</dbReference>
<dbReference type="CDD" id="cd22197">
    <property type="entry name" value="TRPV2"/>
    <property type="match status" value="1"/>
</dbReference>
<dbReference type="FunFam" id="1.25.40.20:FF:000018">
    <property type="entry name" value="Transient receptor potential cation channel subfamily V member 1"/>
    <property type="match status" value="1"/>
</dbReference>
<dbReference type="Gene3D" id="1.25.40.20">
    <property type="entry name" value="Ankyrin repeat-containing domain"/>
    <property type="match status" value="1"/>
</dbReference>
<dbReference type="InterPro" id="IPR002110">
    <property type="entry name" value="Ankyrin_rpt"/>
</dbReference>
<dbReference type="InterPro" id="IPR036770">
    <property type="entry name" value="Ankyrin_rpt-contain_sf"/>
</dbReference>
<dbReference type="InterPro" id="IPR005821">
    <property type="entry name" value="Ion_trans_dom"/>
</dbReference>
<dbReference type="InterPro" id="IPR024862">
    <property type="entry name" value="TRPV"/>
</dbReference>
<dbReference type="InterPro" id="IPR008347">
    <property type="entry name" value="TrpV1-4"/>
</dbReference>
<dbReference type="NCBIfam" id="TIGR00870">
    <property type="entry name" value="trp"/>
    <property type="match status" value="1"/>
</dbReference>
<dbReference type="PANTHER" id="PTHR10582:SF5">
    <property type="entry name" value="TRANSIENT RECEPTOR POTENTIAL CATION CHANNEL SUBFAMILY V MEMBER 2"/>
    <property type="match status" value="1"/>
</dbReference>
<dbReference type="PANTHER" id="PTHR10582">
    <property type="entry name" value="TRANSIENT RECEPTOR POTENTIAL ION CHANNEL PROTEIN"/>
    <property type="match status" value="1"/>
</dbReference>
<dbReference type="Pfam" id="PF12796">
    <property type="entry name" value="Ank_2"/>
    <property type="match status" value="1"/>
</dbReference>
<dbReference type="Pfam" id="PF00520">
    <property type="entry name" value="Ion_trans"/>
    <property type="match status" value="1"/>
</dbReference>
<dbReference type="PRINTS" id="PR01768">
    <property type="entry name" value="TRPVRECEPTOR"/>
</dbReference>
<dbReference type="SMART" id="SM00248">
    <property type="entry name" value="ANK"/>
    <property type="match status" value="4"/>
</dbReference>
<dbReference type="SUPFAM" id="SSF48403">
    <property type="entry name" value="Ankyrin repeat"/>
    <property type="match status" value="1"/>
</dbReference>
<dbReference type="PROSITE" id="PS50297">
    <property type="entry name" value="ANK_REP_REGION"/>
    <property type="match status" value="1"/>
</dbReference>
<dbReference type="PROSITE" id="PS50088">
    <property type="entry name" value="ANK_REPEAT"/>
    <property type="match status" value="1"/>
</dbReference>
<feature type="chain" id="PRO_0000215343" description="Transient receptor potential cation channel subfamily V member 2">
    <location>
        <begin position="1"/>
        <end position="756"/>
    </location>
</feature>
<feature type="topological domain" description="Cytoplasmic" evidence="3">
    <location>
        <begin position="1"/>
        <end position="387"/>
    </location>
</feature>
<feature type="transmembrane region" description="Helical" evidence="3">
    <location>
        <begin position="388"/>
        <end position="408"/>
    </location>
</feature>
<feature type="topological domain" description="Extracellular" evidence="3">
    <location>
        <begin position="409"/>
        <end position="428"/>
    </location>
</feature>
<feature type="transmembrane region" description="Helical" evidence="3">
    <location>
        <begin position="429"/>
        <end position="449"/>
    </location>
</feature>
<feature type="topological domain" description="Cytoplasmic" evidence="3">
    <location>
        <begin position="450"/>
        <end position="455"/>
    </location>
</feature>
<feature type="transmembrane region" description="Helical" evidence="3">
    <location>
        <begin position="456"/>
        <end position="476"/>
    </location>
</feature>
<feature type="topological domain" description="Extracellular" evidence="3">
    <location>
        <begin position="477"/>
        <end position="490"/>
    </location>
</feature>
<feature type="transmembrane region" description="Helical" evidence="3">
    <location>
        <begin position="491"/>
        <end position="511"/>
    </location>
</feature>
<feature type="topological domain" description="Cytoplasmic" evidence="3">
    <location>
        <begin position="512"/>
        <end position="532"/>
    </location>
</feature>
<feature type="transmembrane region" description="Helical" evidence="3">
    <location>
        <begin position="533"/>
        <end position="553"/>
    </location>
</feature>
<feature type="intramembrane region" description="Pore-forming" evidence="3">
    <location>
        <begin position="568"/>
        <end position="604"/>
    </location>
</feature>
<feature type="transmembrane region" description="Helical" evidence="3">
    <location>
        <begin position="617"/>
        <end position="637"/>
    </location>
</feature>
<feature type="topological domain" description="Cytoplasmic" evidence="3">
    <location>
        <begin position="638"/>
        <end position="756"/>
    </location>
</feature>
<feature type="repeat" description="ANK 1" evidence="1">
    <location>
        <begin position="68"/>
        <end position="110"/>
    </location>
</feature>
<feature type="repeat" description="ANK 2" evidence="1">
    <location>
        <begin position="111"/>
        <end position="157"/>
    </location>
</feature>
<feature type="repeat" description="ANK 3" evidence="3">
    <location>
        <begin position="158"/>
        <end position="203"/>
    </location>
</feature>
<feature type="repeat" description="ANK 4" evidence="3">
    <location>
        <begin position="204"/>
        <end position="239"/>
    </location>
</feature>
<feature type="repeat" description="ANK 5" evidence="1">
    <location>
        <begin position="240"/>
        <end position="288"/>
    </location>
</feature>
<feature type="repeat" description="ANK 6" evidence="3">
    <location>
        <begin position="289"/>
        <end position="315"/>
    </location>
</feature>
<feature type="region of interest" description="Required for interaction with SLC50A1" evidence="1">
    <location>
        <begin position="1"/>
        <end position="385"/>
    </location>
</feature>
<feature type="region of interest" description="Disordered" evidence="4">
    <location>
        <begin position="1"/>
        <end position="45"/>
    </location>
</feature>
<feature type="region of interest" description="Disordered" evidence="4">
    <location>
        <begin position="559"/>
        <end position="583"/>
    </location>
</feature>
<feature type="region of interest" description="Disordered" evidence="4">
    <location>
        <begin position="719"/>
        <end position="756"/>
    </location>
</feature>
<feature type="compositionally biased region" description="Polar residues" evidence="4">
    <location>
        <begin position="732"/>
        <end position="741"/>
    </location>
</feature>
<feature type="modified residue" description="Phosphoserine" evidence="8 9">
    <location>
        <position position="15"/>
    </location>
</feature>
<feature type="modified residue" description="Phosphoserine" evidence="1">
    <location>
        <position position="77"/>
    </location>
</feature>
<feature type="modified residue" description="Phosphoserine" evidence="9">
    <location>
        <position position="743"/>
    </location>
</feature>
<feature type="modified residue" description="Phosphoserine" evidence="8">
    <location>
        <position position="755"/>
    </location>
</feature>
<feature type="glycosylation site" description="N-linked (GlcNAc...) asparagine" evidence="3">
    <location>
        <position position="567"/>
    </location>
</feature>
<feature type="sequence conflict" description="In Ref. 1; BAA78478." evidence="7" ref="1">
    <original>D</original>
    <variation>N</variation>
    <location>
        <position position="565"/>
    </location>
</feature>
<feature type="helix" evidence="11">
    <location>
        <begin position="72"/>
        <end position="81"/>
    </location>
</feature>
<feature type="helix" evidence="11">
    <location>
        <begin position="85"/>
        <end position="87"/>
    </location>
</feature>
<feature type="helix" evidence="11">
    <location>
        <begin position="90"/>
        <end position="96"/>
    </location>
</feature>
<feature type="helix" evidence="11">
    <location>
        <begin position="101"/>
        <end position="105"/>
    </location>
</feature>
<feature type="turn" evidence="11">
    <location>
        <begin position="109"/>
        <end position="111"/>
    </location>
</feature>
<feature type="helix" evidence="11">
    <location>
        <begin position="115"/>
        <end position="120"/>
    </location>
</feature>
<feature type="strand" evidence="14">
    <location>
        <begin position="124"/>
        <end position="126"/>
    </location>
</feature>
<feature type="helix" evidence="11">
    <location>
        <begin position="131"/>
        <end position="140"/>
    </location>
</feature>
<feature type="strand" evidence="11">
    <location>
        <begin position="147"/>
        <end position="149"/>
    </location>
</feature>
<feature type="helix" evidence="11">
    <location>
        <begin position="155"/>
        <end position="157"/>
    </location>
</feature>
<feature type="helix" evidence="11">
    <location>
        <begin position="162"/>
        <end position="168"/>
    </location>
</feature>
<feature type="helix" evidence="11">
    <location>
        <begin position="172"/>
        <end position="180"/>
    </location>
</feature>
<feature type="turn" evidence="11">
    <location>
        <begin position="192"/>
        <end position="194"/>
    </location>
</feature>
<feature type="strand" evidence="11">
    <location>
        <begin position="198"/>
        <end position="200"/>
    </location>
</feature>
<feature type="helix" evidence="11">
    <location>
        <begin position="208"/>
        <end position="214"/>
    </location>
</feature>
<feature type="helix" evidence="11">
    <location>
        <begin position="218"/>
        <end position="225"/>
    </location>
</feature>
<feature type="strand" evidence="14">
    <location>
        <begin position="228"/>
        <end position="230"/>
    </location>
</feature>
<feature type="strand" evidence="10">
    <location>
        <begin position="239"/>
        <end position="241"/>
    </location>
</feature>
<feature type="helix" evidence="11">
    <location>
        <begin position="244"/>
        <end position="250"/>
    </location>
</feature>
<feature type="helix" evidence="11">
    <location>
        <begin position="256"/>
        <end position="276"/>
    </location>
</feature>
<feature type="strand" evidence="11">
    <location>
        <begin position="278"/>
        <end position="280"/>
    </location>
</feature>
<feature type="helix" evidence="14">
    <location>
        <begin position="282"/>
        <end position="284"/>
    </location>
</feature>
<feature type="strand" evidence="11">
    <location>
        <begin position="288"/>
        <end position="290"/>
    </location>
</feature>
<feature type="helix" evidence="11">
    <location>
        <begin position="293"/>
        <end position="299"/>
    </location>
</feature>
<feature type="helix" evidence="11">
    <location>
        <begin position="304"/>
        <end position="310"/>
    </location>
</feature>
<feature type="strand" evidence="12">
    <location>
        <begin position="319"/>
        <end position="321"/>
    </location>
</feature>
<feature type="strand" evidence="11">
    <location>
        <begin position="323"/>
        <end position="326"/>
    </location>
</feature>
<feature type="strand" evidence="11">
    <location>
        <begin position="333"/>
        <end position="339"/>
    </location>
</feature>
<feature type="turn" evidence="11">
    <location>
        <begin position="341"/>
        <end position="343"/>
    </location>
</feature>
<feature type="strand" evidence="11">
    <location>
        <begin position="347"/>
        <end position="349"/>
    </location>
</feature>
<feature type="helix" evidence="11">
    <location>
        <begin position="351"/>
        <end position="357"/>
    </location>
</feature>
<feature type="helix" evidence="11">
    <location>
        <begin position="364"/>
        <end position="368"/>
    </location>
</feature>
<feature type="helix" evidence="11">
    <location>
        <begin position="371"/>
        <end position="383"/>
    </location>
</feature>
<feature type="helix" evidence="11">
    <location>
        <begin position="385"/>
        <end position="407"/>
    </location>
</feature>
<feature type="helix" evidence="11">
    <location>
        <begin position="424"/>
        <end position="453"/>
    </location>
</feature>
<feature type="turn" evidence="11">
    <location>
        <begin position="454"/>
        <end position="456"/>
    </location>
</feature>
<feature type="turn" evidence="11">
    <location>
        <begin position="458"/>
        <end position="460"/>
    </location>
</feature>
<feature type="strand" evidence="11">
    <location>
        <begin position="462"/>
        <end position="464"/>
    </location>
</feature>
<feature type="helix" evidence="11">
    <location>
        <begin position="468"/>
        <end position="487"/>
    </location>
</feature>
<feature type="helix" evidence="11">
    <location>
        <begin position="492"/>
        <end position="510"/>
    </location>
</feature>
<feature type="turn" evidence="11">
    <location>
        <begin position="511"/>
        <end position="513"/>
    </location>
</feature>
<feature type="helix" evidence="11">
    <location>
        <begin position="515"/>
        <end position="530"/>
    </location>
</feature>
<feature type="helix" evidence="11">
    <location>
        <begin position="533"/>
        <end position="552"/>
    </location>
</feature>
<feature type="strand" evidence="15">
    <location>
        <begin position="553"/>
        <end position="557"/>
    </location>
</feature>
<feature type="helix" evidence="11">
    <location>
        <begin position="588"/>
        <end position="599"/>
    </location>
</feature>
<feature type="strand" evidence="11">
    <location>
        <begin position="609"/>
        <end position="612"/>
    </location>
</feature>
<feature type="helix" evidence="11">
    <location>
        <begin position="614"/>
        <end position="628"/>
    </location>
</feature>
<feature type="turn" evidence="11">
    <location>
        <begin position="629"/>
        <end position="631"/>
    </location>
</feature>
<feature type="helix" evidence="11">
    <location>
        <begin position="632"/>
        <end position="646"/>
    </location>
</feature>
<feature type="helix" evidence="11">
    <location>
        <begin position="648"/>
        <end position="667"/>
    </location>
</feature>
<feature type="strand" evidence="13">
    <location>
        <begin position="671"/>
        <end position="673"/>
    </location>
</feature>
<feature type="strand" evidence="11">
    <location>
        <begin position="681"/>
        <end position="685"/>
    </location>
</feature>
<feature type="strand" evidence="14">
    <location>
        <begin position="690"/>
        <end position="693"/>
    </location>
</feature>
<feature type="strand" evidence="11">
    <location>
        <begin position="696"/>
        <end position="705"/>
    </location>
</feature>
<feature type="helix" evidence="11">
    <location>
        <begin position="707"/>
        <end position="712"/>
    </location>
</feature>
<keyword id="KW-0002">3D-structure</keyword>
<keyword id="KW-0040">ANK repeat</keyword>
<keyword id="KW-0106">Calcium</keyword>
<keyword id="KW-0107">Calcium channel</keyword>
<keyword id="KW-0109">Calcium transport</keyword>
<keyword id="KW-1003">Cell membrane</keyword>
<keyword id="KW-0963">Cytoplasm</keyword>
<keyword id="KW-0325">Glycoprotein</keyword>
<keyword id="KW-0407">Ion channel</keyword>
<keyword id="KW-0406">Ion transport</keyword>
<keyword id="KW-0472">Membrane</keyword>
<keyword id="KW-0597">Phosphoprotein</keyword>
<keyword id="KW-1185">Reference proteome</keyword>
<keyword id="KW-0677">Repeat</keyword>
<keyword id="KW-0812">Transmembrane</keyword>
<keyword id="KW-1133">Transmembrane helix</keyword>
<keyword id="KW-0813">Transport</keyword>
<organism>
    <name type="scientific">Mus musculus</name>
    <name type="common">Mouse</name>
    <dbReference type="NCBI Taxonomy" id="10090"/>
    <lineage>
        <taxon>Eukaryota</taxon>
        <taxon>Metazoa</taxon>
        <taxon>Chordata</taxon>
        <taxon>Craniata</taxon>
        <taxon>Vertebrata</taxon>
        <taxon>Euteleostomi</taxon>
        <taxon>Mammalia</taxon>
        <taxon>Eutheria</taxon>
        <taxon>Euarchontoglires</taxon>
        <taxon>Glires</taxon>
        <taxon>Rodentia</taxon>
        <taxon>Myomorpha</taxon>
        <taxon>Muroidea</taxon>
        <taxon>Muridae</taxon>
        <taxon>Murinae</taxon>
        <taxon>Mus</taxon>
        <taxon>Mus</taxon>
    </lineage>
</organism>
<accession>Q9WTR1</accession>
<accession>Q99K71</accession>
<proteinExistence type="evidence at protein level"/>